<proteinExistence type="inferred from homology"/>
<gene>
    <name evidence="1" type="primary">rpsM</name>
    <name type="ordered locus">A1I_02150</name>
</gene>
<accession>A8GVD5</accession>
<feature type="chain" id="PRO_1000051888" description="Small ribosomal subunit protein uS13">
    <location>
        <begin position="1"/>
        <end position="125"/>
    </location>
</feature>
<reference key="1">
    <citation type="submission" date="2007-09" db="EMBL/GenBank/DDBJ databases">
        <title>Complete genome sequencing of Rickettsia bellii.</title>
        <authorList>
            <person name="Madan A."/>
            <person name="Lee H."/>
            <person name="Madan A."/>
            <person name="Yoon J.-G."/>
            <person name="Ryu G.-Y."/>
            <person name="Dasch G."/>
            <person name="Ereemeva M."/>
        </authorList>
    </citation>
    <scope>NUCLEOTIDE SEQUENCE [LARGE SCALE GENOMIC DNA]</scope>
    <source>
        <strain>OSU 85-389</strain>
    </source>
</reference>
<protein>
    <recommendedName>
        <fullName evidence="1">Small ribosomal subunit protein uS13</fullName>
    </recommendedName>
    <alternativeName>
        <fullName evidence="2">30S ribosomal protein S13</fullName>
    </alternativeName>
</protein>
<dbReference type="EMBL" id="CP000849">
    <property type="protein sequence ID" value="ABV78812.1"/>
    <property type="molecule type" value="Genomic_DNA"/>
</dbReference>
<dbReference type="RefSeq" id="WP_011477699.1">
    <property type="nucleotide sequence ID" value="NC_009883.1"/>
</dbReference>
<dbReference type="SMR" id="A8GVD5"/>
<dbReference type="KEGG" id="rbo:A1I_02150"/>
<dbReference type="HOGENOM" id="CLU_103849_1_2_5"/>
<dbReference type="GO" id="GO:0005829">
    <property type="term" value="C:cytosol"/>
    <property type="evidence" value="ECO:0007669"/>
    <property type="project" value="TreeGrafter"/>
</dbReference>
<dbReference type="GO" id="GO:0015935">
    <property type="term" value="C:small ribosomal subunit"/>
    <property type="evidence" value="ECO:0007669"/>
    <property type="project" value="TreeGrafter"/>
</dbReference>
<dbReference type="GO" id="GO:0019843">
    <property type="term" value="F:rRNA binding"/>
    <property type="evidence" value="ECO:0007669"/>
    <property type="project" value="UniProtKB-UniRule"/>
</dbReference>
<dbReference type="GO" id="GO:0003735">
    <property type="term" value="F:structural constituent of ribosome"/>
    <property type="evidence" value="ECO:0007669"/>
    <property type="project" value="InterPro"/>
</dbReference>
<dbReference type="GO" id="GO:0000049">
    <property type="term" value="F:tRNA binding"/>
    <property type="evidence" value="ECO:0007669"/>
    <property type="project" value="UniProtKB-UniRule"/>
</dbReference>
<dbReference type="GO" id="GO:0006412">
    <property type="term" value="P:translation"/>
    <property type="evidence" value="ECO:0007669"/>
    <property type="project" value="UniProtKB-UniRule"/>
</dbReference>
<dbReference type="FunFam" id="1.10.8.50:FF:000001">
    <property type="entry name" value="30S ribosomal protein S13"/>
    <property type="match status" value="1"/>
</dbReference>
<dbReference type="Gene3D" id="1.10.8.50">
    <property type="match status" value="1"/>
</dbReference>
<dbReference type="Gene3D" id="4.10.910.10">
    <property type="entry name" value="30s ribosomal protein s13, domain 2"/>
    <property type="match status" value="1"/>
</dbReference>
<dbReference type="HAMAP" id="MF_01315">
    <property type="entry name" value="Ribosomal_uS13"/>
    <property type="match status" value="1"/>
</dbReference>
<dbReference type="InterPro" id="IPR027437">
    <property type="entry name" value="Rbsml_uS13_C"/>
</dbReference>
<dbReference type="InterPro" id="IPR001892">
    <property type="entry name" value="Ribosomal_uS13"/>
</dbReference>
<dbReference type="InterPro" id="IPR010979">
    <property type="entry name" value="Ribosomal_uS13-like_H2TH"/>
</dbReference>
<dbReference type="InterPro" id="IPR019980">
    <property type="entry name" value="Ribosomal_uS13_bac-type"/>
</dbReference>
<dbReference type="InterPro" id="IPR018269">
    <property type="entry name" value="Ribosomal_uS13_CS"/>
</dbReference>
<dbReference type="NCBIfam" id="TIGR03631">
    <property type="entry name" value="uS13_bact"/>
    <property type="match status" value="1"/>
</dbReference>
<dbReference type="PANTHER" id="PTHR10871">
    <property type="entry name" value="30S RIBOSOMAL PROTEIN S13/40S RIBOSOMAL PROTEIN S18"/>
    <property type="match status" value="1"/>
</dbReference>
<dbReference type="PANTHER" id="PTHR10871:SF1">
    <property type="entry name" value="SMALL RIBOSOMAL SUBUNIT PROTEIN US13M"/>
    <property type="match status" value="1"/>
</dbReference>
<dbReference type="Pfam" id="PF00416">
    <property type="entry name" value="Ribosomal_S13"/>
    <property type="match status" value="1"/>
</dbReference>
<dbReference type="PIRSF" id="PIRSF002134">
    <property type="entry name" value="Ribosomal_S13"/>
    <property type="match status" value="1"/>
</dbReference>
<dbReference type="SUPFAM" id="SSF46946">
    <property type="entry name" value="S13-like H2TH domain"/>
    <property type="match status" value="1"/>
</dbReference>
<dbReference type="PROSITE" id="PS00646">
    <property type="entry name" value="RIBOSOMAL_S13_1"/>
    <property type="match status" value="1"/>
</dbReference>
<dbReference type="PROSITE" id="PS50159">
    <property type="entry name" value="RIBOSOMAL_S13_2"/>
    <property type="match status" value="1"/>
</dbReference>
<sequence>MARIASVNIPDNKRLVVSLTYIYGLGTTMAKTICKKAKILEDKKVKDLTDQELISLRNIIENEYKVEGDLRREVTLNIKKKKDIRSYQGLRHIRKLPVRGQNTHSNARTRKGKAVAIAGKKKAVK</sequence>
<keyword id="KW-0687">Ribonucleoprotein</keyword>
<keyword id="KW-0689">Ribosomal protein</keyword>
<keyword id="KW-0694">RNA-binding</keyword>
<keyword id="KW-0699">rRNA-binding</keyword>
<keyword id="KW-0820">tRNA-binding</keyword>
<comment type="function">
    <text evidence="1">Located at the top of the head of the 30S subunit, it contacts several helices of the 16S rRNA. In the 70S ribosome it contacts the 23S rRNA (bridge B1a) and protein L5 of the 50S subunit (bridge B1b), connecting the 2 subunits; these bridges are implicated in subunit movement. Contacts the tRNAs in the A and P-sites.</text>
</comment>
<comment type="subunit">
    <text evidence="1">Part of the 30S ribosomal subunit. Forms a loose heterodimer with protein S19. Forms two bridges to the 50S subunit in the 70S ribosome.</text>
</comment>
<comment type="similarity">
    <text evidence="1">Belongs to the universal ribosomal protein uS13 family.</text>
</comment>
<evidence type="ECO:0000255" key="1">
    <source>
        <dbReference type="HAMAP-Rule" id="MF_01315"/>
    </source>
</evidence>
<evidence type="ECO:0000305" key="2"/>
<organism>
    <name type="scientific">Rickettsia bellii (strain OSU 85-389)</name>
    <dbReference type="NCBI Taxonomy" id="391896"/>
    <lineage>
        <taxon>Bacteria</taxon>
        <taxon>Pseudomonadati</taxon>
        <taxon>Pseudomonadota</taxon>
        <taxon>Alphaproteobacteria</taxon>
        <taxon>Rickettsiales</taxon>
        <taxon>Rickettsiaceae</taxon>
        <taxon>Rickettsieae</taxon>
        <taxon>Rickettsia</taxon>
        <taxon>belli group</taxon>
    </lineage>
</organism>
<name>RS13_RICB8</name>